<comment type="function">
    <text evidence="1">Plays a central role during spermatogenesis by repressing transposable elements and preventing their mobilization, which is essential for the germline integrity. Acts via the piRNA metabolic process, which mediates the repression of transposable elements during meiosis by forming complexes composed of piRNAs and Piwi proteins and governs the methylation and subsequent repression of transposons. Its association with pi-bodies suggests a participation in the primary piRNAs metabolic process. Required prior to the pachytene stage to facilitate the production of multiple types of piRNAs, including those associated with repeats involved in the regulation of retrotransposons. May act by mediating protein-protein interactions during germ cell maturation (By similarity).</text>
</comment>
<comment type="subunit">
    <text evidence="1">Interacts with DDX4, PIWIL1, RANBP9 and TDRD1.</text>
</comment>
<comment type="subcellular location">
    <subcellularLocation>
        <location evidence="1">Cytoplasm</location>
    </subcellularLocation>
    <text evidence="1">Component of the meiotic nuage, also named P granule, a germ-cell-specific organelle required to repress transposon activity during meiosis. Specifically localizes to pi-bodies, a subset of the nuage which contains primary piRNAs (By similarity).</text>
</comment>
<evidence type="ECO:0000250" key="1"/>
<evidence type="ECO:0000250" key="2">
    <source>
        <dbReference type="UniProtKB" id="Q8VD46"/>
    </source>
</evidence>
<evidence type="ECO:0000255" key="3">
    <source>
        <dbReference type="PROSITE-ProRule" id="PRU00184"/>
    </source>
</evidence>
<evidence type="ECO:0000256" key="4">
    <source>
        <dbReference type="SAM" id="MobiDB-lite"/>
    </source>
</evidence>
<proteinExistence type="inferred from homology"/>
<gene>
    <name type="primary">ASZ1</name>
    <name type="synonym">GASZ</name>
</gene>
<keyword id="KW-0040">ANK repeat</keyword>
<keyword id="KW-0963">Cytoplasm</keyword>
<keyword id="KW-0217">Developmental protein</keyword>
<keyword id="KW-0221">Differentiation</keyword>
<keyword id="KW-0469">Meiosis</keyword>
<keyword id="KW-0597">Phosphoprotein</keyword>
<keyword id="KW-0677">Repeat</keyword>
<keyword id="KW-0943">RNA-mediated gene silencing</keyword>
<keyword id="KW-0744">Spermatogenesis</keyword>
<feature type="chain" id="PRO_0000295861" description="Ankyrin repeat, SAM and basic leucine zipper domain-containing protein 1">
    <location>
        <begin position="1"/>
        <end position="475"/>
    </location>
</feature>
<feature type="repeat" description="ANK 1">
    <location>
        <begin position="44"/>
        <end position="73"/>
    </location>
</feature>
<feature type="repeat" description="ANK 2">
    <location>
        <begin position="77"/>
        <end position="106"/>
    </location>
</feature>
<feature type="repeat" description="ANK 3">
    <location>
        <begin position="109"/>
        <end position="146"/>
    </location>
</feature>
<feature type="repeat" description="ANK 4">
    <location>
        <begin position="147"/>
        <end position="176"/>
    </location>
</feature>
<feature type="repeat" description="ANK 5">
    <location>
        <begin position="180"/>
        <end position="209"/>
    </location>
</feature>
<feature type="repeat" description="ANK 6">
    <location>
        <begin position="213"/>
        <end position="242"/>
    </location>
</feature>
<feature type="domain" description="SAM" evidence="3">
    <location>
        <begin position="273"/>
        <end position="336"/>
    </location>
</feature>
<feature type="region of interest" description="Disordered" evidence="4">
    <location>
        <begin position="1"/>
        <end position="24"/>
    </location>
</feature>
<feature type="modified residue" description="Phosphoserine" evidence="2">
    <location>
        <position position="16"/>
    </location>
</feature>
<feature type="modified residue" description="Phosphoserine" evidence="2">
    <location>
        <position position="17"/>
    </location>
</feature>
<feature type="modified residue" description="Phosphoserine" evidence="2">
    <location>
        <position position="19"/>
    </location>
</feature>
<dbReference type="EMBL" id="DP000012">
    <property type="protein sequence ID" value="ABA02587.1"/>
    <property type="molecule type" value="Genomic_DNA"/>
</dbReference>
<dbReference type="SMR" id="A4D7T3"/>
<dbReference type="GO" id="GO:0071546">
    <property type="term" value="C:pi-body"/>
    <property type="evidence" value="ECO:0000250"/>
    <property type="project" value="UniProtKB"/>
</dbReference>
<dbReference type="GO" id="GO:0030154">
    <property type="term" value="P:cell differentiation"/>
    <property type="evidence" value="ECO:0007669"/>
    <property type="project" value="UniProtKB-KW"/>
</dbReference>
<dbReference type="GO" id="GO:0007140">
    <property type="term" value="P:male meiotic nuclear division"/>
    <property type="evidence" value="ECO:0000250"/>
    <property type="project" value="UniProtKB"/>
</dbReference>
<dbReference type="GO" id="GO:0031047">
    <property type="term" value="P:regulatory ncRNA-mediated gene silencing"/>
    <property type="evidence" value="ECO:0007669"/>
    <property type="project" value="UniProtKB-KW"/>
</dbReference>
<dbReference type="GO" id="GO:0007283">
    <property type="term" value="P:spermatogenesis"/>
    <property type="evidence" value="ECO:0000250"/>
    <property type="project" value="UniProtKB"/>
</dbReference>
<dbReference type="GO" id="GO:0010526">
    <property type="term" value="P:transposable element silencing"/>
    <property type="evidence" value="ECO:0000250"/>
    <property type="project" value="UniProtKB"/>
</dbReference>
<dbReference type="CDD" id="cd09521">
    <property type="entry name" value="SAM_ASZ1"/>
    <property type="match status" value="1"/>
</dbReference>
<dbReference type="FunFam" id="1.25.40.20:FF:000192">
    <property type="entry name" value="Ankyrin repeat, SAM and basic leucine zipper domain-containing 1"/>
    <property type="match status" value="1"/>
</dbReference>
<dbReference type="FunFam" id="1.10.150.50:FF:000060">
    <property type="entry name" value="Ankyrin repeat, SAM and basic leucine zipper domain-containing protein 1"/>
    <property type="match status" value="1"/>
</dbReference>
<dbReference type="Gene3D" id="1.25.40.20">
    <property type="entry name" value="Ankyrin repeat-containing domain"/>
    <property type="match status" value="1"/>
</dbReference>
<dbReference type="Gene3D" id="1.10.150.50">
    <property type="entry name" value="Transcription Factor, Ets-1"/>
    <property type="match status" value="1"/>
</dbReference>
<dbReference type="InterPro" id="IPR002110">
    <property type="entry name" value="Ankyrin_rpt"/>
</dbReference>
<dbReference type="InterPro" id="IPR036770">
    <property type="entry name" value="Ankyrin_rpt-contain_sf"/>
</dbReference>
<dbReference type="InterPro" id="IPR042650">
    <property type="entry name" value="Asz1_SAM"/>
</dbReference>
<dbReference type="InterPro" id="IPR001660">
    <property type="entry name" value="SAM"/>
</dbReference>
<dbReference type="InterPro" id="IPR013761">
    <property type="entry name" value="SAM/pointed_sf"/>
</dbReference>
<dbReference type="PANTHER" id="PTHR24157">
    <property type="entry name" value="ANKYRIN REPEAT, SAM AND BASIC LEUCINE ZIPPER DOMAIN-CONTAINING PROTEIN 1"/>
    <property type="match status" value="1"/>
</dbReference>
<dbReference type="PANTHER" id="PTHR24157:SF3">
    <property type="entry name" value="ANKYRIN REPEAT, SAM AND BASIC LEUCINE ZIPPER DOMAIN-CONTAINING PROTEIN 1"/>
    <property type="match status" value="1"/>
</dbReference>
<dbReference type="Pfam" id="PF00023">
    <property type="entry name" value="Ank"/>
    <property type="match status" value="1"/>
</dbReference>
<dbReference type="Pfam" id="PF12796">
    <property type="entry name" value="Ank_2"/>
    <property type="match status" value="1"/>
</dbReference>
<dbReference type="Pfam" id="PF07647">
    <property type="entry name" value="SAM_2"/>
    <property type="match status" value="1"/>
</dbReference>
<dbReference type="SMART" id="SM00248">
    <property type="entry name" value="ANK"/>
    <property type="match status" value="5"/>
</dbReference>
<dbReference type="SMART" id="SM00454">
    <property type="entry name" value="SAM"/>
    <property type="match status" value="1"/>
</dbReference>
<dbReference type="SUPFAM" id="SSF48403">
    <property type="entry name" value="Ankyrin repeat"/>
    <property type="match status" value="1"/>
</dbReference>
<dbReference type="SUPFAM" id="SSF47769">
    <property type="entry name" value="SAM/Pointed domain"/>
    <property type="match status" value="1"/>
</dbReference>
<dbReference type="PROSITE" id="PS50297">
    <property type="entry name" value="ANK_REP_REGION"/>
    <property type="match status" value="1"/>
</dbReference>
<dbReference type="PROSITE" id="PS50088">
    <property type="entry name" value="ANK_REPEAT"/>
    <property type="match status" value="3"/>
</dbReference>
<dbReference type="PROSITE" id="PS50105">
    <property type="entry name" value="SAM_DOMAIN"/>
    <property type="match status" value="1"/>
</dbReference>
<reference key="1">
    <citation type="submission" date="2005-08" db="EMBL/GenBank/DDBJ databases">
        <title>NISC comparative sequencing initiative.</title>
        <authorList>
            <person name="Antonellis A."/>
            <person name="Ayele K."/>
            <person name="Benjamin B."/>
            <person name="Blakesley R.W."/>
            <person name="Boakye A."/>
            <person name="Bouffard G.G."/>
            <person name="Brinkley C."/>
            <person name="Brooks S."/>
            <person name="Chu G."/>
            <person name="Coleman H."/>
            <person name="Engle J."/>
            <person name="Gestole M."/>
            <person name="Greene A."/>
            <person name="Guan X."/>
            <person name="Gupta J."/>
            <person name="Haghighi P."/>
            <person name="Han J."/>
            <person name="Hansen N."/>
            <person name="Ho S.-L."/>
            <person name="Hu P."/>
            <person name="Hunter G."/>
            <person name="Hurle B."/>
            <person name="Idol J.R."/>
            <person name="Kwong P."/>
            <person name="Laric P."/>
            <person name="Larson S."/>
            <person name="Lee-Lin S.-Q."/>
            <person name="Legaspi R."/>
            <person name="Madden M."/>
            <person name="Maduro Q.L."/>
            <person name="Maduro V.B."/>
            <person name="Margulies E.H."/>
            <person name="Masiello C."/>
            <person name="Maskeri B."/>
            <person name="McDowell J."/>
            <person name="Mojidi H.A."/>
            <person name="Mullikin J.C."/>
            <person name="Oestreicher J.S."/>
            <person name="Park M."/>
            <person name="Portnoy M.E."/>
            <person name="Prasad A."/>
            <person name="Puri O."/>
            <person name="Reddix-Dugue N."/>
            <person name="Schandler K."/>
            <person name="Schueler M.G."/>
            <person name="Sison C."/>
            <person name="Stantripop S."/>
            <person name="Stephen E."/>
            <person name="Taye A."/>
            <person name="Thomas J.W."/>
            <person name="Thomas P.J."/>
            <person name="Tsipouri V."/>
            <person name="Ung L."/>
            <person name="Vogt J.L."/>
            <person name="Wetherby K.D."/>
            <person name="Young A."/>
            <person name="Green E.D."/>
        </authorList>
    </citation>
    <scope>NUCLEOTIDE SEQUENCE [LARGE SCALE GENOMIC DNA]</scope>
</reference>
<name>ASZ1_NOTEU</name>
<organism>
    <name type="scientific">Notamacropus eugenii</name>
    <name type="common">Tammar wallaby</name>
    <name type="synonym">Macropus eugenii</name>
    <dbReference type="NCBI Taxonomy" id="9315"/>
    <lineage>
        <taxon>Eukaryota</taxon>
        <taxon>Metazoa</taxon>
        <taxon>Chordata</taxon>
        <taxon>Craniata</taxon>
        <taxon>Vertebrata</taxon>
        <taxon>Euteleostomi</taxon>
        <taxon>Mammalia</taxon>
        <taxon>Metatheria</taxon>
        <taxon>Diprotodontia</taxon>
        <taxon>Macropodidae</taxon>
        <taxon>Notamacropus</taxon>
    </lineage>
</organism>
<sequence>MAGSLGNLVVAGGGESSDSEEDYWDIGYMDRPPQTTKGSLATEERDETFKKALTSGDVSLVEELLNSGMSVESSFQFGWTPLMCAVNIANVELVRILLDRGANASFDKDQYTILMAACAAHASESQILKTVELLLSRNANPNVACRKCMTPVMYAAREGHAQVVALLVAHGAEINAQDENGYTALTWAARHGHKSVVLKLLELGANKTIQTKDGKTAGEIAKRNKHPELFTLLSLTVNPLQGKLQHLTKEEAICRLLTTDGDAGKEHKFSSYTAFGDLEVFLHGLGLEHMTELLKERDITLRQLLTMRKEDFTENGITNIRDQQKILDAVKELQVEEIKFGELTEVINLEISSDEFLNFLLKLNKQCGHLTTAVQNIINQLPVNSHKIVLEWGSSQRFTSVCENLVCNVEDLGEEVCKLKDLIQKLQNDQKNDPCRVLPMETYSTWNSRFLKRATFTVCGFGFLLFIFKLTFRKS</sequence>
<accession>A4D7T3</accession>
<protein>
    <recommendedName>
        <fullName>Ankyrin repeat, SAM and basic leucine zipper domain-containing protein 1</fullName>
    </recommendedName>
    <alternativeName>
        <fullName>Germ cell-specific ankyrin, SAM and basic leucine zipper domain-containing protein</fullName>
    </alternativeName>
</protein>